<reference key="1">
    <citation type="journal article" date="2005" name="Genome Biol.">
        <title>Full-length cDNAs from chicken bursal lymphocytes to facilitate gene function analysis.</title>
        <authorList>
            <person name="Caldwell R.B."/>
            <person name="Kierzek A.M."/>
            <person name="Arakawa H."/>
            <person name="Bezzubov Y."/>
            <person name="Zaim J."/>
            <person name="Fiedler P."/>
            <person name="Kutter S."/>
            <person name="Blagodatski A."/>
            <person name="Kostovska D."/>
            <person name="Koter M."/>
            <person name="Plachy J."/>
            <person name="Carninci P."/>
            <person name="Hayashizaki Y."/>
            <person name="Buerstedde J.-M."/>
        </authorList>
    </citation>
    <scope>NUCLEOTIDE SEQUENCE [LARGE SCALE MRNA]</scope>
    <source>
        <strain>CB</strain>
        <tissue>Bursa of Fabricius</tissue>
    </source>
</reference>
<reference key="2">
    <citation type="journal article" date="2000" name="EMBO J.">
        <title>Possible association of BLM in decreasing DNA double strand breaks during DNA replication.</title>
        <authorList>
            <person name="Wang W."/>
            <person name="Seki M."/>
            <person name="Narita Y."/>
            <person name="Sonoda E."/>
            <person name="Takeda S."/>
            <person name="Yamada K."/>
            <person name="Masuko T."/>
            <person name="Katada T."/>
            <person name="Enomoto T."/>
        </authorList>
    </citation>
    <scope>NUCLEOTIDE SEQUENCE [MRNA] OF 42-1183</scope>
    <source>
        <tissue>Testis</tissue>
    </source>
</reference>
<reference key="3">
    <citation type="journal article" date="2017" name="J. Biol. Chem.">
        <title>A helical bundle in the N-terminal domain of the BLM helicase mediates dimer and potentially hexamer formation.</title>
        <authorList>
            <person name="Shi J."/>
            <person name="Chen W.F."/>
            <person name="Zhang B."/>
            <person name="Fan S.H."/>
            <person name="Ai X."/>
            <person name="Liu N.N."/>
            <person name="Rety S."/>
            <person name="Xi X.G."/>
        </authorList>
    </citation>
    <scope>X-RAY CRYSTALLOGRAPHY (2.72 ANGSTROMS) OF 97-162 OF HOMODIMER</scope>
    <scope>FUNCTION</scope>
    <scope>DNA-BINDING</scope>
    <scope>CATALYTIC ACTIVITY</scope>
    <scope>SUBUNIT</scope>
    <scope>HOMOOLIGOMERIZATION</scope>
    <scope>REGION</scope>
</reference>
<feature type="chain" id="PRO_0000205041" description="RecQ-like DNA helicase BLM">
    <location>
        <begin position="1"/>
        <end position="1183"/>
    </location>
</feature>
<feature type="domain" description="Helicase ATP-binding" evidence="2 4">
    <location>
        <begin position="447"/>
        <end position="622"/>
    </location>
</feature>
<feature type="domain" description="Helicase C-terminal" evidence="2 5">
    <location>
        <begin position="648"/>
        <end position="795"/>
    </location>
</feature>
<feature type="domain" description="HRDC" evidence="2 3">
    <location>
        <begin position="983"/>
        <end position="1063"/>
    </location>
</feature>
<feature type="region of interest" description="Disordered" evidence="6">
    <location>
        <begin position="1"/>
        <end position="109"/>
    </location>
</feature>
<feature type="region of interest" description="Necessary for dimerization and homooligomerization" evidence="7">
    <location>
        <begin position="110"/>
        <end position="162"/>
    </location>
</feature>
<feature type="region of interest" description="Disordered" evidence="6">
    <location>
        <begin position="164"/>
        <end position="215"/>
    </location>
</feature>
<feature type="region of interest" description="Disordered" evidence="6">
    <location>
        <begin position="260"/>
        <end position="323"/>
    </location>
</feature>
<feature type="region of interest" description="Disordered" evidence="6">
    <location>
        <begin position="381"/>
        <end position="408"/>
    </location>
</feature>
<feature type="region of interest" description="3' overhang DNA-binding" evidence="2">
    <location>
        <begin position="641"/>
        <end position="644"/>
    </location>
</feature>
<feature type="region of interest" description="3' overhang DNA-binding" evidence="2">
    <location>
        <begin position="668"/>
        <end position="670"/>
    </location>
</feature>
<feature type="region of interest" description="3' overhang DNA-binding" evidence="2">
    <location>
        <begin position="771"/>
        <end position="774"/>
    </location>
</feature>
<feature type="region of interest" description="DNA Holliday junction binding" evidence="2">
    <location>
        <begin position="865"/>
        <end position="910"/>
    </location>
</feature>
<feature type="region of interest" description="3' overhang DNA-binding" evidence="2">
    <location>
        <begin position="881"/>
        <end position="883"/>
    </location>
</feature>
<feature type="region of interest" description="3' overhang DNA-binding" evidence="2">
    <location>
        <begin position="892"/>
        <end position="896"/>
    </location>
</feature>
<feature type="region of interest" description="3' overhang DNA-binding" evidence="2">
    <location>
        <begin position="931"/>
        <end position="937"/>
    </location>
</feature>
<feature type="region of interest" description="Necessary for ssDNA and DNA Holliday junction binding" evidence="2">
    <location>
        <begin position="998"/>
        <end position="1015"/>
    </location>
</feature>
<feature type="region of interest" description="Disordered" evidence="6">
    <location>
        <begin position="1068"/>
        <end position="1183"/>
    </location>
</feature>
<feature type="short sequence motif" description="DEAH box">
    <location>
        <begin position="566"/>
        <end position="569"/>
    </location>
</feature>
<feature type="short sequence motif" description="Nuclear localization signal" evidence="1">
    <location>
        <begin position="1104"/>
        <end position="1120"/>
    </location>
</feature>
<feature type="compositionally biased region" description="Polar residues" evidence="6">
    <location>
        <begin position="14"/>
        <end position="27"/>
    </location>
</feature>
<feature type="compositionally biased region" description="Acidic residues" evidence="6">
    <location>
        <begin position="38"/>
        <end position="48"/>
    </location>
</feature>
<feature type="compositionally biased region" description="Polar residues" evidence="6">
    <location>
        <begin position="206"/>
        <end position="215"/>
    </location>
</feature>
<feature type="compositionally biased region" description="Polar residues" evidence="6">
    <location>
        <begin position="265"/>
        <end position="280"/>
    </location>
</feature>
<feature type="compositionally biased region" description="Polar residues" evidence="6">
    <location>
        <begin position="1091"/>
        <end position="1101"/>
    </location>
</feature>
<feature type="compositionally biased region" description="Basic residues" evidence="6">
    <location>
        <begin position="1133"/>
        <end position="1142"/>
    </location>
</feature>
<feature type="compositionally biased region" description="Low complexity" evidence="6">
    <location>
        <begin position="1143"/>
        <end position="1158"/>
    </location>
</feature>
<feature type="binding site" evidence="2">
    <location>
        <begin position="439"/>
        <end position="443"/>
    </location>
    <ligand>
        <name>ATP</name>
        <dbReference type="ChEBI" id="CHEBI:30616"/>
    </ligand>
</feature>
<feature type="binding site" evidence="2">
    <location>
        <begin position="463"/>
        <end position="467"/>
    </location>
    <ligand>
        <name>ATP</name>
        <dbReference type="ChEBI" id="CHEBI:30616"/>
    </ligand>
</feature>
<feature type="binding site" evidence="2">
    <location>
        <position position="753"/>
    </location>
    <ligand>
        <name>ATP</name>
        <dbReference type="ChEBI" id="CHEBI:30616"/>
    </ligand>
</feature>
<feature type="binding site" evidence="2">
    <location>
        <position position="807"/>
    </location>
    <ligand>
        <name>Zn(2+)</name>
        <dbReference type="ChEBI" id="CHEBI:29105"/>
    </ligand>
</feature>
<feature type="binding site" evidence="2">
    <location>
        <position position="826"/>
    </location>
    <ligand>
        <name>Zn(2+)</name>
        <dbReference type="ChEBI" id="CHEBI:29105"/>
    </ligand>
</feature>
<feature type="binding site" evidence="2">
    <location>
        <position position="834"/>
    </location>
    <ligand>
        <name>Zn(2+)</name>
        <dbReference type="ChEBI" id="CHEBI:29105"/>
    </ligand>
</feature>
<feature type="binding site" evidence="2">
    <location>
        <position position="837"/>
    </location>
    <ligand>
        <name>Zn(2+)</name>
        <dbReference type="ChEBI" id="CHEBI:29105"/>
    </ligand>
</feature>
<feature type="site" description="3' overhang DNA-binding" evidence="2">
    <location>
        <position position="488"/>
    </location>
</feature>
<feature type="site" description="3' overhang DNA-binding" evidence="2">
    <location>
        <position position="579"/>
    </location>
</feature>
<feature type="site" description="3' overhang DNA-binding; via amide nitrogen" evidence="2">
    <location>
        <position position="691"/>
    </location>
</feature>
<feature type="site" description="3' overhang DNA-binding" evidence="2">
    <location>
        <position position="717"/>
    </location>
</feature>
<feature type="site" description="3' overhang DNA-binding" evidence="2">
    <location>
        <position position="739"/>
    </location>
</feature>
<feature type="site" description="3' overhang DNA-binding" evidence="2">
    <location>
        <position position="881"/>
    </location>
</feature>
<feature type="sequence conflict" description="In Ref. 2; BAA96742." evidence="8" ref="2">
    <original>K</original>
    <variation>R</variation>
    <location>
        <position position="112"/>
    </location>
</feature>
<feature type="sequence conflict" description="In Ref. 2; BAA96742." evidence="8" ref="2">
    <original>R</original>
    <variation>Q</variation>
    <location>
        <position position="198"/>
    </location>
</feature>
<feature type="sequence conflict" description="In Ref. 2; BAA96742." evidence="8" ref="2">
    <original>S</original>
    <variation>G</variation>
    <location>
        <position position="223"/>
    </location>
</feature>
<feature type="sequence conflict" description="In Ref. 2; BAA96742." evidence="8" ref="2">
    <original>E</original>
    <variation>K</variation>
    <location>
        <position position="253"/>
    </location>
</feature>
<feature type="sequence conflict" description="In Ref. 2; BAA96742." evidence="8" ref="2">
    <original>R</original>
    <variation>K</variation>
    <location>
        <position position="289"/>
    </location>
</feature>
<feature type="sequence conflict" description="In Ref. 2; BAA96742." evidence="8" ref="2">
    <original>S</original>
    <variation>L</variation>
    <location>
        <position position="319"/>
    </location>
</feature>
<feature type="sequence conflict" description="In Ref. 2; BAA96742." evidence="8" ref="2">
    <original>F</original>
    <variation>L</variation>
    <location>
        <position position="339"/>
    </location>
</feature>
<feature type="sequence conflict" description="In Ref. 2; BAA96742." evidence="8" ref="2">
    <original>A</original>
    <variation>T</variation>
    <location>
        <position position="351"/>
    </location>
</feature>
<feature type="sequence conflict" description="In Ref. 2; BAA96742." evidence="8" ref="2">
    <original>A</original>
    <variation>P</variation>
    <location>
        <position position="358"/>
    </location>
</feature>
<feature type="sequence conflict" description="In Ref. 2; BAA96742." evidence="8" ref="2">
    <original>A</original>
    <variation>V</variation>
    <location>
        <position position="399"/>
    </location>
</feature>
<feature type="sequence conflict" description="In Ref. 2; BAA96742." evidence="8" ref="2">
    <original>S</original>
    <variation>A</variation>
    <location>
        <position position="505"/>
    </location>
</feature>
<feature type="sequence conflict" description="In Ref. 2; BAA96742." evidence="8" ref="2">
    <original>N</original>
    <variation>D</variation>
    <location>
        <position position="556"/>
    </location>
</feature>
<feature type="sequence conflict" description="In Ref. 2; BAA96742." evidence="8" ref="2">
    <original>I</original>
    <variation>V</variation>
    <location>
        <position position="741"/>
    </location>
</feature>
<feature type="sequence conflict" description="In Ref. 2; BAA96742." evidence="8" ref="2">
    <original>Q</original>
    <variation>H</variation>
    <location>
        <position position="746"/>
    </location>
</feature>
<feature type="sequence conflict" description="In Ref. 2; BAA96742." evidence="8" ref="2">
    <original>R</original>
    <variation>T</variation>
    <location>
        <position position="839"/>
    </location>
</feature>
<feature type="sequence conflict" description="In Ref. 2; BAA96742." evidence="8" ref="2">
    <original>V</original>
    <variation>M</variation>
    <location>
        <position position="866"/>
    </location>
</feature>
<feature type="sequence conflict" description="In Ref. 2; BAA96742." evidence="8" ref="2">
    <original>K</original>
    <variation>E</variation>
    <location>
        <position position="893"/>
    </location>
</feature>
<feature type="sequence conflict" description="In Ref. 2; BAA96742." evidence="8" ref="2">
    <original>Q</original>
    <variation>H</variation>
    <location>
        <position position="898"/>
    </location>
</feature>
<feature type="sequence conflict" description="In Ref. 2; BAA96742." evidence="8" ref="2">
    <original>V</original>
    <variation>F</variation>
    <location>
        <position position="921"/>
    </location>
</feature>
<feature type="sequence conflict" description="In Ref. 2; BAA96742." evidence="8" ref="2">
    <original>A</original>
    <variation>E</variation>
    <location>
        <position position="1087"/>
    </location>
</feature>
<feature type="helix" evidence="9">
    <location>
        <begin position="115"/>
        <end position="132"/>
    </location>
</feature>
<feature type="helix" evidence="9">
    <location>
        <begin position="136"/>
        <end position="141"/>
    </location>
</feature>
<feature type="helix" evidence="9">
    <location>
        <begin position="145"/>
        <end position="161"/>
    </location>
</feature>
<gene>
    <name type="primary">BLM</name>
</gene>
<evidence type="ECO:0000250" key="1"/>
<evidence type="ECO:0000250" key="2">
    <source>
        <dbReference type="UniProtKB" id="P54132"/>
    </source>
</evidence>
<evidence type="ECO:0000255" key="3">
    <source>
        <dbReference type="PROSITE-ProRule" id="PRU00328"/>
    </source>
</evidence>
<evidence type="ECO:0000255" key="4">
    <source>
        <dbReference type="PROSITE-ProRule" id="PRU00541"/>
    </source>
</evidence>
<evidence type="ECO:0000255" key="5">
    <source>
        <dbReference type="PROSITE-ProRule" id="PRU00542"/>
    </source>
</evidence>
<evidence type="ECO:0000256" key="6">
    <source>
        <dbReference type="SAM" id="MobiDB-lite"/>
    </source>
</evidence>
<evidence type="ECO:0000269" key="7">
    <source>
    </source>
</evidence>
<evidence type="ECO:0000305" key="8"/>
<evidence type="ECO:0007829" key="9">
    <source>
        <dbReference type="PDB" id="5LUT"/>
    </source>
</evidence>
<protein>
    <recommendedName>
        <fullName evidence="8">RecQ-like DNA helicase BLM</fullName>
        <ecNumber evidence="7">5.6.2.4</ecNumber>
    </recommendedName>
    <alternativeName>
        <fullName>Bloom syndrome protein homolog</fullName>
    </alternativeName>
    <alternativeName>
        <fullName evidence="8">DNA 3'-5' helicase BLM</fullName>
    </alternativeName>
    <alternativeName>
        <fullName>RecQ helicase homolog</fullName>
    </alternativeName>
</protein>
<keyword id="KW-0002">3D-structure</keyword>
<keyword id="KW-0067">ATP-binding</keyword>
<keyword id="KW-0227">DNA damage</keyword>
<keyword id="KW-0234">DNA repair</keyword>
<keyword id="KW-0235">DNA replication</keyword>
<keyword id="KW-0238">DNA-binding</keyword>
<keyword id="KW-0347">Helicase</keyword>
<keyword id="KW-0378">Hydrolase</keyword>
<keyword id="KW-0413">Isomerase</keyword>
<keyword id="KW-0479">Metal-binding</keyword>
<keyword id="KW-0547">Nucleotide-binding</keyword>
<keyword id="KW-0539">Nucleus</keyword>
<keyword id="KW-1185">Reference proteome</keyword>
<keyword id="KW-0862">Zinc</keyword>
<name>BLM_CHICK</name>
<accession>Q9I920</accession>
<accession>Q5ZJM1</accession>
<sequence length="1183" mass="130294">MEEARAATNGGSGESQKLSNGEKSSQLEPGDVGNELLADIELEEDDYLDVVPPSPEEELPSFSPSVRNVSNIFKESPTDGRSAVHGTESEPELMAPKQPAAEQDSSAEHADKGLHLEQQLYSVMEDICKLVDAIPLHELTSISCAKELLQQRELRRKLLADSGALNTNSVNGPRNWKACVQQDPSSRPGTPLCSGPGRGVSSVGSTPKSTNLPSVLSRTVNSSSFSTIRNQTLDKLDTSYSSKETDQEVICLEPAALPSPKVNGKGSTSLSRPSEASFNGSWCEKPTGRDSGNWRVPERPTASTALKAQHTAPAGNPASGCWDVNDTDFDLDHFDIDDFDEGWEEAVAPEAAPEAPPAPQWQPLREGSASLRCRLLAAAAGSAPGPHPTAPKSGCGISAKSSSEPLVHNPAHERFRGMKFSHSEEMLKIFHRKFGLHSFRTNQLEAINAALLGEDCFILMPTGGGKSLCYQLPACVSAGVTVVISPLRSLIIDQVQKLKTLDIASTYLTGDITDADASKTYMQLSKKDPIIKLLYVTPEKVCASNRLLSALENLYNRKLLARFVIDEAHCVSQWGHDFRKDYKRLNMLRKKFHSVPMMALTATANPRVQKDIQNQLEMLKPQVFTMSFNRHNLKYDVLPKKPKKVAMDCLEWIKKYHPHDSGIIYCLSRHECDTTAAILQKEGLAALAYHAGLTDSNRDLVQKKWVNQEGCQVICATIAFGMGIDKPDVRYVIHASLPKSIEGYYQESGRAGRDGEMSHCLLFYSYSDVTRLRRLILMEKDGNSHTRQTHFNNLYSMVHYCENVVDCRRIQLLAYFGETDFNPNFCKDHPEVICDNCSRKKDYKSRNVTDEVKSIIRFVQQHCGQVGGINGNRNTGSGRYTLNMMVDIFLGAKSAKIQSGIFGKGAAYSRHNVERLFRKLVLDKILDEDLYITANDQAVAYVVLGEKAQAVLNGLLQVEFHETENASAIRKQRASVTKMSQREEMVKKCLGELTDTCKTLGKIFDVHYFNIFSTSTLKKIAETLSSDAEVLLQIDGVTEDKLEKYGAEIIKVMDKYSEWTTPEDAACQSVDTAPGSAGTPGSEEEAADDVVTSSYFGGNANQRRKRKRLPNSGESKRKKTSSGGSQQFYSKGARYRRARRAPGSRAAAPAQSSALRGAGARLGIMAPPKPSSRHFLQPSYAVL</sequence>
<comment type="function">
    <text evidence="2 7">ATP-dependent DNA helicase that unwinds single- and double-stranded DNA in a 3'-5' direction (PubMed:28228481). Participates in DNA replication and repair (By similarity). Involved in 5'-end resection of DNA during double-strand break (DSB) repair (By similarity). Negatively regulates sister chromatid exchange (SCE) (By similarity). Stimulates DNA 4-way junction branch migration and DNA Holliday junction dissolution (By similarity). Binds DNA (PubMed:28228481). Binds single-stranded DNA (ssDNA), forked duplex DNA and DNA Holliday junction (By similarity).</text>
</comment>
<comment type="catalytic activity">
    <reaction evidence="7">
        <text>Couples ATP hydrolysis with the unwinding of duplex DNA by translocating in the 3'-5' direction.</text>
        <dbReference type="EC" id="5.6.2.4"/>
    </reaction>
</comment>
<comment type="catalytic activity">
    <reaction evidence="7">
        <text>ATP + H2O = ADP + phosphate + H(+)</text>
        <dbReference type="Rhea" id="RHEA:13065"/>
        <dbReference type="ChEBI" id="CHEBI:15377"/>
        <dbReference type="ChEBI" id="CHEBI:15378"/>
        <dbReference type="ChEBI" id="CHEBI:30616"/>
        <dbReference type="ChEBI" id="CHEBI:43474"/>
        <dbReference type="ChEBI" id="CHEBI:456216"/>
    </reaction>
</comment>
<comment type="cofactor">
    <cofactor evidence="2">
        <name>Zn(2+)</name>
        <dbReference type="ChEBI" id="CHEBI:29105"/>
    </cofactor>
    <text evidence="2">Binds 1 zinc ion per subunit.</text>
</comment>
<comment type="subunit">
    <text evidence="7">Monomer (PubMed:28228481). Homodimer (via N-terminus) (PubMed:28228481). Homotetramer (via N-terminus); dimer of dimers (PubMed:28228481). Homohexamer (via N-terminus) (PubMed:28228481). Self-association negatively regulates DNA unwinding amplitude and rate (PubMed:28228481). Oligomer complexes dissociate into monomer in presence of ATP (PubMed:28228481).</text>
</comment>
<comment type="subcellular location">
    <subcellularLocation>
        <location evidence="1">Nucleus</location>
    </subcellularLocation>
</comment>
<comment type="domain">
    <text evidence="2 7">The N-terminal region mediates dimerization and homooligomerization (PubMed:28228481). Both the helicase ATP-binding domain and the helicase C-terminal domain form intramolecular interactions with the HRDC domain in a ATP-dependent manner (By similarity). The HRDC domain is required for single-stranded DNA (ssDNA) and DNA Holliday junction binding (By similarity).</text>
</comment>
<comment type="similarity">
    <text evidence="8">Belongs to the helicase family. RecQ subfamily.</text>
</comment>
<proteinExistence type="evidence at protein level"/>
<dbReference type="EC" id="5.6.2.4" evidence="7"/>
<dbReference type="EMBL" id="AJ720413">
    <property type="protein sequence ID" value="CAG32072.1"/>
    <property type="molecule type" value="mRNA"/>
</dbReference>
<dbReference type="EMBL" id="AB040747">
    <property type="protein sequence ID" value="BAA96742.1"/>
    <property type="molecule type" value="mRNA"/>
</dbReference>
<dbReference type="RefSeq" id="NP_001007088.2">
    <property type="nucleotide sequence ID" value="NM_001007087.1"/>
</dbReference>
<dbReference type="PDB" id="5LUT">
    <property type="method" value="X-ray"/>
    <property type="resolution" value="2.72 A"/>
    <property type="chains" value="A/B/C/D/E/F/G/H/I/J/K=97-162"/>
</dbReference>
<dbReference type="PDBsum" id="5LUT"/>
<dbReference type="SMR" id="Q9I920"/>
<dbReference type="FunCoup" id="Q9I920">
    <property type="interactions" value="736"/>
</dbReference>
<dbReference type="STRING" id="9031.ENSGALP00000013422"/>
<dbReference type="GlyGen" id="Q9I920">
    <property type="glycosylation" value="1 site"/>
</dbReference>
<dbReference type="PaxDb" id="9031-ENSGALP00000013422"/>
<dbReference type="GeneID" id="415577"/>
<dbReference type="KEGG" id="gga:415577"/>
<dbReference type="CTD" id="641"/>
<dbReference type="VEuPathDB" id="HostDB:geneid_415577"/>
<dbReference type="eggNOG" id="KOG0351">
    <property type="taxonomic scope" value="Eukaryota"/>
</dbReference>
<dbReference type="InParanoid" id="Q9I920"/>
<dbReference type="OrthoDB" id="10261556at2759"/>
<dbReference type="PRO" id="PR:Q9I920"/>
<dbReference type="Proteomes" id="UP000000539">
    <property type="component" value="Unassembled WGS sequence"/>
</dbReference>
<dbReference type="GO" id="GO:0005694">
    <property type="term" value="C:chromosome"/>
    <property type="evidence" value="ECO:0000318"/>
    <property type="project" value="GO_Central"/>
</dbReference>
<dbReference type="GO" id="GO:0005737">
    <property type="term" value="C:cytoplasm"/>
    <property type="evidence" value="ECO:0000318"/>
    <property type="project" value="GO_Central"/>
</dbReference>
<dbReference type="GO" id="GO:0005634">
    <property type="term" value="C:nucleus"/>
    <property type="evidence" value="ECO:0000318"/>
    <property type="project" value="GO_Central"/>
</dbReference>
<dbReference type="GO" id="GO:0043138">
    <property type="term" value="F:3'-5' DNA helicase activity"/>
    <property type="evidence" value="ECO:0000318"/>
    <property type="project" value="GO_Central"/>
</dbReference>
<dbReference type="GO" id="GO:0005524">
    <property type="term" value="F:ATP binding"/>
    <property type="evidence" value="ECO:0000250"/>
    <property type="project" value="UniProtKB"/>
</dbReference>
<dbReference type="GO" id="GO:0016887">
    <property type="term" value="F:ATP hydrolysis activity"/>
    <property type="evidence" value="ECO:0007669"/>
    <property type="project" value="RHEA"/>
</dbReference>
<dbReference type="GO" id="GO:0008094">
    <property type="term" value="F:ATP-dependent activity, acting on DNA"/>
    <property type="evidence" value="ECO:0000250"/>
    <property type="project" value="UniProtKB"/>
</dbReference>
<dbReference type="GO" id="GO:0003677">
    <property type="term" value="F:DNA binding"/>
    <property type="evidence" value="ECO:0000314"/>
    <property type="project" value="UniProtKB"/>
</dbReference>
<dbReference type="GO" id="GO:0003678">
    <property type="term" value="F:DNA helicase activity"/>
    <property type="evidence" value="ECO:0000314"/>
    <property type="project" value="UniProtKB"/>
</dbReference>
<dbReference type="GO" id="GO:0061749">
    <property type="term" value="F:forked DNA-dependent helicase activity"/>
    <property type="evidence" value="ECO:0000250"/>
    <property type="project" value="UniProtKB"/>
</dbReference>
<dbReference type="GO" id="GO:0000400">
    <property type="term" value="F:four-way junction DNA binding"/>
    <property type="evidence" value="ECO:0000250"/>
    <property type="project" value="UniProtKB"/>
</dbReference>
<dbReference type="GO" id="GO:0009378">
    <property type="term" value="F:four-way junction helicase activity"/>
    <property type="evidence" value="ECO:0000250"/>
    <property type="project" value="UniProtKB"/>
</dbReference>
<dbReference type="GO" id="GO:0042803">
    <property type="term" value="F:protein homodimerization activity"/>
    <property type="evidence" value="ECO:0000314"/>
    <property type="project" value="UniProtKB"/>
</dbReference>
<dbReference type="GO" id="GO:0003697">
    <property type="term" value="F:single-stranded DNA binding"/>
    <property type="evidence" value="ECO:0000250"/>
    <property type="project" value="UniProtKB"/>
</dbReference>
<dbReference type="GO" id="GO:0008270">
    <property type="term" value="F:zinc ion binding"/>
    <property type="evidence" value="ECO:0000250"/>
    <property type="project" value="UniProtKB"/>
</dbReference>
<dbReference type="GO" id="GO:0000729">
    <property type="term" value="P:DNA double-strand break processing"/>
    <property type="evidence" value="ECO:0000250"/>
    <property type="project" value="UniProtKB"/>
</dbReference>
<dbReference type="GO" id="GO:0006260">
    <property type="term" value="P:DNA replication"/>
    <property type="evidence" value="ECO:0000318"/>
    <property type="project" value="GO_Central"/>
</dbReference>
<dbReference type="GO" id="GO:0000724">
    <property type="term" value="P:double-strand break repair via homologous recombination"/>
    <property type="evidence" value="ECO:0000318"/>
    <property type="project" value="GO_Central"/>
</dbReference>
<dbReference type="GO" id="GO:0051259">
    <property type="term" value="P:protein complex oligomerization"/>
    <property type="evidence" value="ECO:0000314"/>
    <property type="project" value="UniProtKB"/>
</dbReference>
<dbReference type="GO" id="GO:0051260">
    <property type="term" value="P:protein homooligomerization"/>
    <property type="evidence" value="ECO:0000314"/>
    <property type="project" value="UniProtKB"/>
</dbReference>
<dbReference type="GO" id="GO:0000723">
    <property type="term" value="P:telomere maintenance"/>
    <property type="evidence" value="ECO:0000318"/>
    <property type="project" value="GO_Central"/>
</dbReference>
<dbReference type="CDD" id="cd18016">
    <property type="entry name" value="DEXHc_RecQ2_BLM"/>
    <property type="match status" value="1"/>
</dbReference>
<dbReference type="CDD" id="cd18794">
    <property type="entry name" value="SF2_C_RecQ"/>
    <property type="match status" value="1"/>
</dbReference>
<dbReference type="FunFam" id="1.10.10.10:FF:000310">
    <property type="entry name" value="Bloom syndrome RecQ-like helicase"/>
    <property type="match status" value="1"/>
</dbReference>
<dbReference type="FunFam" id="1.10.150.80:FF:000003">
    <property type="entry name" value="Bloom syndrome RecQ-like helicase"/>
    <property type="match status" value="1"/>
</dbReference>
<dbReference type="FunFam" id="3.40.50.300:FF:000537">
    <property type="entry name" value="Bloom syndrome RecQ-like helicase"/>
    <property type="match status" value="1"/>
</dbReference>
<dbReference type="FunFam" id="3.40.50.300:FF:000340">
    <property type="entry name" value="Bloom syndrome, RecQ helicase"/>
    <property type="match status" value="1"/>
</dbReference>
<dbReference type="Gene3D" id="1.10.150.80">
    <property type="entry name" value="HRDC domain"/>
    <property type="match status" value="1"/>
</dbReference>
<dbReference type="Gene3D" id="3.40.50.300">
    <property type="entry name" value="P-loop containing nucleotide triphosphate hydrolases"/>
    <property type="match status" value="2"/>
</dbReference>
<dbReference type="Gene3D" id="1.10.10.10">
    <property type="entry name" value="Winged helix-like DNA-binding domain superfamily/Winged helix DNA-binding domain"/>
    <property type="match status" value="1"/>
</dbReference>
<dbReference type="InterPro" id="IPR012532">
    <property type="entry name" value="BDHCT"/>
</dbReference>
<dbReference type="InterPro" id="IPR032437">
    <property type="entry name" value="BLM_N"/>
</dbReference>
<dbReference type="InterPro" id="IPR011545">
    <property type="entry name" value="DEAD/DEAH_box_helicase_dom"/>
</dbReference>
<dbReference type="InterPro" id="IPR002464">
    <property type="entry name" value="DNA/RNA_helicase_DEAH_CS"/>
</dbReference>
<dbReference type="InterPro" id="IPR004589">
    <property type="entry name" value="DNA_helicase_ATP-dep_RecQ"/>
</dbReference>
<dbReference type="InterPro" id="IPR014001">
    <property type="entry name" value="Helicase_ATP-bd"/>
</dbReference>
<dbReference type="InterPro" id="IPR001650">
    <property type="entry name" value="Helicase_C-like"/>
</dbReference>
<dbReference type="InterPro" id="IPR010997">
    <property type="entry name" value="HRDC-like_sf"/>
</dbReference>
<dbReference type="InterPro" id="IPR002121">
    <property type="entry name" value="HRDC_dom"/>
</dbReference>
<dbReference type="InterPro" id="IPR044876">
    <property type="entry name" value="HRDC_dom_sf"/>
</dbReference>
<dbReference type="InterPro" id="IPR027417">
    <property type="entry name" value="P-loop_NTPase"/>
</dbReference>
<dbReference type="InterPro" id="IPR032284">
    <property type="entry name" value="RecQ_Zn-bd"/>
</dbReference>
<dbReference type="InterPro" id="IPR018982">
    <property type="entry name" value="RQC_domain"/>
</dbReference>
<dbReference type="InterPro" id="IPR036388">
    <property type="entry name" value="WH-like_DNA-bd_sf"/>
</dbReference>
<dbReference type="InterPro" id="IPR036390">
    <property type="entry name" value="WH_DNA-bd_sf"/>
</dbReference>
<dbReference type="NCBIfam" id="TIGR00614">
    <property type="entry name" value="recQ_fam"/>
    <property type="match status" value="1"/>
</dbReference>
<dbReference type="PANTHER" id="PTHR13710">
    <property type="entry name" value="DNA HELICASE RECQ FAMILY MEMBER"/>
    <property type="match status" value="1"/>
</dbReference>
<dbReference type="PANTHER" id="PTHR13710:SF153">
    <property type="entry name" value="RECQ-LIKE DNA HELICASE BLM"/>
    <property type="match status" value="1"/>
</dbReference>
<dbReference type="Pfam" id="PF08072">
    <property type="entry name" value="BDHCT"/>
    <property type="match status" value="1"/>
</dbReference>
<dbReference type="Pfam" id="PF16202">
    <property type="entry name" value="BLM_N"/>
    <property type="match status" value="1"/>
</dbReference>
<dbReference type="Pfam" id="PF00270">
    <property type="entry name" value="DEAD"/>
    <property type="match status" value="1"/>
</dbReference>
<dbReference type="Pfam" id="PF00271">
    <property type="entry name" value="Helicase_C"/>
    <property type="match status" value="1"/>
</dbReference>
<dbReference type="Pfam" id="PF00570">
    <property type="entry name" value="HRDC"/>
    <property type="match status" value="1"/>
</dbReference>
<dbReference type="Pfam" id="PF16124">
    <property type="entry name" value="RecQ_Zn_bind"/>
    <property type="match status" value="1"/>
</dbReference>
<dbReference type="Pfam" id="PF09382">
    <property type="entry name" value="RQC"/>
    <property type="match status" value="1"/>
</dbReference>
<dbReference type="SMART" id="SM00487">
    <property type="entry name" value="DEXDc"/>
    <property type="match status" value="1"/>
</dbReference>
<dbReference type="SMART" id="SM00490">
    <property type="entry name" value="HELICc"/>
    <property type="match status" value="1"/>
</dbReference>
<dbReference type="SMART" id="SM00341">
    <property type="entry name" value="HRDC"/>
    <property type="match status" value="1"/>
</dbReference>
<dbReference type="SMART" id="SM00956">
    <property type="entry name" value="RQC"/>
    <property type="match status" value="1"/>
</dbReference>
<dbReference type="SUPFAM" id="SSF47819">
    <property type="entry name" value="HRDC-like"/>
    <property type="match status" value="1"/>
</dbReference>
<dbReference type="SUPFAM" id="SSF52540">
    <property type="entry name" value="P-loop containing nucleoside triphosphate hydrolases"/>
    <property type="match status" value="2"/>
</dbReference>
<dbReference type="SUPFAM" id="SSF46785">
    <property type="entry name" value="Winged helix' DNA-binding domain"/>
    <property type="match status" value="1"/>
</dbReference>
<dbReference type="PROSITE" id="PS00690">
    <property type="entry name" value="DEAH_ATP_HELICASE"/>
    <property type="match status" value="1"/>
</dbReference>
<dbReference type="PROSITE" id="PS51192">
    <property type="entry name" value="HELICASE_ATP_BIND_1"/>
    <property type="match status" value="1"/>
</dbReference>
<dbReference type="PROSITE" id="PS51194">
    <property type="entry name" value="HELICASE_CTER"/>
    <property type="match status" value="1"/>
</dbReference>
<dbReference type="PROSITE" id="PS50967">
    <property type="entry name" value="HRDC"/>
    <property type="match status" value="1"/>
</dbReference>
<organism>
    <name type="scientific">Gallus gallus</name>
    <name type="common">Chicken</name>
    <dbReference type="NCBI Taxonomy" id="9031"/>
    <lineage>
        <taxon>Eukaryota</taxon>
        <taxon>Metazoa</taxon>
        <taxon>Chordata</taxon>
        <taxon>Craniata</taxon>
        <taxon>Vertebrata</taxon>
        <taxon>Euteleostomi</taxon>
        <taxon>Archelosauria</taxon>
        <taxon>Archosauria</taxon>
        <taxon>Dinosauria</taxon>
        <taxon>Saurischia</taxon>
        <taxon>Theropoda</taxon>
        <taxon>Coelurosauria</taxon>
        <taxon>Aves</taxon>
        <taxon>Neognathae</taxon>
        <taxon>Galloanserae</taxon>
        <taxon>Galliformes</taxon>
        <taxon>Phasianidae</taxon>
        <taxon>Phasianinae</taxon>
        <taxon>Gallus</taxon>
    </lineage>
</organism>